<comment type="function">
    <text evidence="1">Endonuclease that specifically degrades the RNA of RNA-DNA hybrids.</text>
</comment>
<comment type="catalytic activity">
    <reaction evidence="1">
        <text>Endonucleolytic cleavage to 5'-phosphomonoester.</text>
        <dbReference type="EC" id="3.1.26.4"/>
    </reaction>
</comment>
<comment type="cofactor">
    <cofactor evidence="1">
        <name>Mn(2+)</name>
        <dbReference type="ChEBI" id="CHEBI:29035"/>
    </cofactor>
    <cofactor evidence="1">
        <name>Mg(2+)</name>
        <dbReference type="ChEBI" id="CHEBI:18420"/>
    </cofactor>
    <text evidence="1">Manganese or magnesium. Binds 1 divalent metal ion per monomer in the absence of substrate. May bind a second metal ion after substrate binding.</text>
</comment>
<comment type="subcellular location">
    <subcellularLocation>
        <location evidence="1">Cytoplasm</location>
    </subcellularLocation>
</comment>
<comment type="similarity">
    <text evidence="1">Belongs to the RNase HII family.</text>
</comment>
<sequence>MHILTAGVDEAGRGPLVGSVFAAAVILPETFDLPGLTDSKKLSEKKRDALAEMIKEQAAAWYVAAATPEEIASLNILHATMLAMKRAVDGLAVRPEKIFIDGNRIPEHLDIPAEAVVKGDSKIIEISAASVLAKTARDAEMYALAQRHPQYGFDKHKGYGTKQHLEALKQYGVLPEHRRDFAPVRNLLAQQTLF</sequence>
<accession>A9M3R5</accession>
<dbReference type="EC" id="3.1.26.4" evidence="1"/>
<dbReference type="EMBL" id="CP000381">
    <property type="protein sequence ID" value="ABX74083.1"/>
    <property type="molecule type" value="Genomic_DNA"/>
</dbReference>
<dbReference type="RefSeq" id="WP_012222112.1">
    <property type="nucleotide sequence ID" value="NC_010120.1"/>
</dbReference>
<dbReference type="SMR" id="A9M3R5"/>
<dbReference type="KEGG" id="nmn:NMCC_1958"/>
<dbReference type="HOGENOM" id="CLU_036532_3_2_4"/>
<dbReference type="Proteomes" id="UP000001177">
    <property type="component" value="Chromosome"/>
</dbReference>
<dbReference type="GO" id="GO:0005737">
    <property type="term" value="C:cytoplasm"/>
    <property type="evidence" value="ECO:0007669"/>
    <property type="project" value="UniProtKB-SubCell"/>
</dbReference>
<dbReference type="GO" id="GO:0032299">
    <property type="term" value="C:ribonuclease H2 complex"/>
    <property type="evidence" value="ECO:0007669"/>
    <property type="project" value="TreeGrafter"/>
</dbReference>
<dbReference type="GO" id="GO:0030145">
    <property type="term" value="F:manganese ion binding"/>
    <property type="evidence" value="ECO:0007669"/>
    <property type="project" value="UniProtKB-UniRule"/>
</dbReference>
<dbReference type="GO" id="GO:0003723">
    <property type="term" value="F:RNA binding"/>
    <property type="evidence" value="ECO:0007669"/>
    <property type="project" value="InterPro"/>
</dbReference>
<dbReference type="GO" id="GO:0004523">
    <property type="term" value="F:RNA-DNA hybrid ribonuclease activity"/>
    <property type="evidence" value="ECO:0007669"/>
    <property type="project" value="UniProtKB-UniRule"/>
</dbReference>
<dbReference type="GO" id="GO:0043137">
    <property type="term" value="P:DNA replication, removal of RNA primer"/>
    <property type="evidence" value="ECO:0007669"/>
    <property type="project" value="TreeGrafter"/>
</dbReference>
<dbReference type="GO" id="GO:0006298">
    <property type="term" value="P:mismatch repair"/>
    <property type="evidence" value="ECO:0007669"/>
    <property type="project" value="TreeGrafter"/>
</dbReference>
<dbReference type="CDD" id="cd07182">
    <property type="entry name" value="RNase_HII_bacteria_HII_like"/>
    <property type="match status" value="1"/>
</dbReference>
<dbReference type="FunFam" id="3.30.420.10:FF:000006">
    <property type="entry name" value="Ribonuclease HII"/>
    <property type="match status" value="1"/>
</dbReference>
<dbReference type="Gene3D" id="3.30.420.10">
    <property type="entry name" value="Ribonuclease H-like superfamily/Ribonuclease H"/>
    <property type="match status" value="1"/>
</dbReference>
<dbReference type="HAMAP" id="MF_00052_B">
    <property type="entry name" value="RNase_HII_B"/>
    <property type="match status" value="1"/>
</dbReference>
<dbReference type="InterPro" id="IPR022898">
    <property type="entry name" value="RNase_HII"/>
</dbReference>
<dbReference type="InterPro" id="IPR001352">
    <property type="entry name" value="RNase_HII/HIII"/>
</dbReference>
<dbReference type="InterPro" id="IPR024567">
    <property type="entry name" value="RNase_HII/HIII_dom"/>
</dbReference>
<dbReference type="InterPro" id="IPR012337">
    <property type="entry name" value="RNaseH-like_sf"/>
</dbReference>
<dbReference type="InterPro" id="IPR036397">
    <property type="entry name" value="RNaseH_sf"/>
</dbReference>
<dbReference type="NCBIfam" id="NF000595">
    <property type="entry name" value="PRK00015.1-3"/>
    <property type="match status" value="1"/>
</dbReference>
<dbReference type="NCBIfam" id="NF000596">
    <property type="entry name" value="PRK00015.1-4"/>
    <property type="match status" value="1"/>
</dbReference>
<dbReference type="PANTHER" id="PTHR10954">
    <property type="entry name" value="RIBONUCLEASE H2 SUBUNIT A"/>
    <property type="match status" value="1"/>
</dbReference>
<dbReference type="PANTHER" id="PTHR10954:SF18">
    <property type="entry name" value="RIBONUCLEASE HII"/>
    <property type="match status" value="1"/>
</dbReference>
<dbReference type="Pfam" id="PF01351">
    <property type="entry name" value="RNase_HII"/>
    <property type="match status" value="1"/>
</dbReference>
<dbReference type="SUPFAM" id="SSF53098">
    <property type="entry name" value="Ribonuclease H-like"/>
    <property type="match status" value="1"/>
</dbReference>
<dbReference type="PROSITE" id="PS51975">
    <property type="entry name" value="RNASE_H_2"/>
    <property type="match status" value="1"/>
</dbReference>
<name>RNH2_NEIM0</name>
<gene>
    <name evidence="1" type="primary">rnhB</name>
    <name type="ordered locus">NMCC_1958</name>
</gene>
<protein>
    <recommendedName>
        <fullName evidence="1">Ribonuclease HII</fullName>
        <shortName evidence="1">RNase HII</shortName>
        <ecNumber evidence="1">3.1.26.4</ecNumber>
    </recommendedName>
</protein>
<reference key="1">
    <citation type="journal article" date="2008" name="Genomics">
        <title>Characterization of ST-4821 complex, a unique Neisseria meningitidis clone.</title>
        <authorList>
            <person name="Peng J."/>
            <person name="Yang L."/>
            <person name="Yang F."/>
            <person name="Yang J."/>
            <person name="Yan Y."/>
            <person name="Nie H."/>
            <person name="Zhang X."/>
            <person name="Xiong Z."/>
            <person name="Jiang Y."/>
            <person name="Cheng F."/>
            <person name="Xu X."/>
            <person name="Chen S."/>
            <person name="Sun L."/>
            <person name="Li W."/>
            <person name="Shen Y."/>
            <person name="Shao Z."/>
            <person name="Liang X."/>
            <person name="Xu J."/>
            <person name="Jin Q."/>
        </authorList>
    </citation>
    <scope>NUCLEOTIDE SEQUENCE [LARGE SCALE GENOMIC DNA]</scope>
    <source>
        <strain>053442</strain>
    </source>
</reference>
<feature type="chain" id="PRO_1000074927" description="Ribonuclease HII">
    <location>
        <begin position="1"/>
        <end position="194"/>
    </location>
</feature>
<feature type="domain" description="RNase H type-2" evidence="2">
    <location>
        <begin position="3"/>
        <end position="193"/>
    </location>
</feature>
<feature type="binding site" evidence="1">
    <location>
        <position position="9"/>
    </location>
    <ligand>
        <name>a divalent metal cation</name>
        <dbReference type="ChEBI" id="CHEBI:60240"/>
    </ligand>
</feature>
<feature type="binding site" evidence="1">
    <location>
        <position position="10"/>
    </location>
    <ligand>
        <name>a divalent metal cation</name>
        <dbReference type="ChEBI" id="CHEBI:60240"/>
    </ligand>
</feature>
<feature type="binding site" evidence="1">
    <location>
        <position position="101"/>
    </location>
    <ligand>
        <name>a divalent metal cation</name>
        <dbReference type="ChEBI" id="CHEBI:60240"/>
    </ligand>
</feature>
<evidence type="ECO:0000255" key="1">
    <source>
        <dbReference type="HAMAP-Rule" id="MF_00052"/>
    </source>
</evidence>
<evidence type="ECO:0000255" key="2">
    <source>
        <dbReference type="PROSITE-ProRule" id="PRU01319"/>
    </source>
</evidence>
<organism>
    <name type="scientific">Neisseria meningitidis serogroup C (strain 053442)</name>
    <dbReference type="NCBI Taxonomy" id="374833"/>
    <lineage>
        <taxon>Bacteria</taxon>
        <taxon>Pseudomonadati</taxon>
        <taxon>Pseudomonadota</taxon>
        <taxon>Betaproteobacteria</taxon>
        <taxon>Neisseriales</taxon>
        <taxon>Neisseriaceae</taxon>
        <taxon>Neisseria</taxon>
    </lineage>
</organism>
<keyword id="KW-0963">Cytoplasm</keyword>
<keyword id="KW-0255">Endonuclease</keyword>
<keyword id="KW-0378">Hydrolase</keyword>
<keyword id="KW-0464">Manganese</keyword>
<keyword id="KW-0479">Metal-binding</keyword>
<keyword id="KW-0540">Nuclease</keyword>
<proteinExistence type="inferred from homology"/>